<reference key="1">
    <citation type="journal article" date="2011" name="J. Bacteriol.">
        <title>Genome of Ochrobactrum anthropi ATCC 49188 T, a versatile opportunistic pathogen and symbiont of several eukaryotic hosts.</title>
        <authorList>
            <person name="Chain P.S."/>
            <person name="Lang D.M."/>
            <person name="Comerci D.J."/>
            <person name="Malfatti S.A."/>
            <person name="Vergez L.M."/>
            <person name="Shin M."/>
            <person name="Ugalde R.A."/>
            <person name="Garcia E."/>
            <person name="Tolmasky M.E."/>
        </authorList>
    </citation>
    <scope>NUCLEOTIDE SEQUENCE [LARGE SCALE GENOMIC DNA]</scope>
    <source>
        <strain>ATCC 49188 / DSM 6882 / CCUG 24695 / JCM 21032 / LMG 3331 / NBRC 15819 / NCTC 12168 / Alc 37</strain>
    </source>
</reference>
<dbReference type="EMBL" id="CP000758">
    <property type="protein sequence ID" value="ABS14347.1"/>
    <property type="molecule type" value="Genomic_DNA"/>
</dbReference>
<dbReference type="RefSeq" id="WP_010659617.1">
    <property type="nucleotide sequence ID" value="NC_009667.1"/>
</dbReference>
<dbReference type="SMR" id="A6WZE3"/>
<dbReference type="STRING" id="439375.Oant_1631"/>
<dbReference type="KEGG" id="oan:Oant_1631"/>
<dbReference type="eggNOG" id="COG1825">
    <property type="taxonomic scope" value="Bacteria"/>
</dbReference>
<dbReference type="HOGENOM" id="CLU_075939_0_0_5"/>
<dbReference type="PhylomeDB" id="A6WZE3"/>
<dbReference type="Proteomes" id="UP000002301">
    <property type="component" value="Chromosome 1"/>
</dbReference>
<dbReference type="GO" id="GO:0022625">
    <property type="term" value="C:cytosolic large ribosomal subunit"/>
    <property type="evidence" value="ECO:0007669"/>
    <property type="project" value="TreeGrafter"/>
</dbReference>
<dbReference type="GO" id="GO:0008097">
    <property type="term" value="F:5S rRNA binding"/>
    <property type="evidence" value="ECO:0007669"/>
    <property type="project" value="InterPro"/>
</dbReference>
<dbReference type="GO" id="GO:0003735">
    <property type="term" value="F:structural constituent of ribosome"/>
    <property type="evidence" value="ECO:0007669"/>
    <property type="project" value="InterPro"/>
</dbReference>
<dbReference type="GO" id="GO:0006412">
    <property type="term" value="P:translation"/>
    <property type="evidence" value="ECO:0007669"/>
    <property type="project" value="UniProtKB-UniRule"/>
</dbReference>
<dbReference type="CDD" id="cd00495">
    <property type="entry name" value="Ribosomal_L25_TL5_CTC"/>
    <property type="match status" value="1"/>
</dbReference>
<dbReference type="Gene3D" id="2.170.120.20">
    <property type="entry name" value="Ribosomal protein L25, beta domain"/>
    <property type="match status" value="1"/>
</dbReference>
<dbReference type="Gene3D" id="2.40.240.10">
    <property type="entry name" value="Ribosomal Protein L25, Chain P"/>
    <property type="match status" value="1"/>
</dbReference>
<dbReference type="HAMAP" id="MF_01334">
    <property type="entry name" value="Ribosomal_bL25_CTC"/>
    <property type="match status" value="1"/>
</dbReference>
<dbReference type="InterPro" id="IPR020056">
    <property type="entry name" value="Rbsml_bL25/Gln-tRNA_synth_N"/>
</dbReference>
<dbReference type="InterPro" id="IPR011035">
    <property type="entry name" value="Ribosomal_bL25/Gln-tRNA_synth"/>
</dbReference>
<dbReference type="InterPro" id="IPR020057">
    <property type="entry name" value="Ribosomal_bL25_b-dom"/>
</dbReference>
<dbReference type="InterPro" id="IPR037121">
    <property type="entry name" value="Ribosomal_bL25_C"/>
</dbReference>
<dbReference type="InterPro" id="IPR001021">
    <property type="entry name" value="Ribosomal_bL25_long"/>
</dbReference>
<dbReference type="InterPro" id="IPR029751">
    <property type="entry name" value="Ribosomal_L25_dom"/>
</dbReference>
<dbReference type="InterPro" id="IPR020930">
    <property type="entry name" value="Ribosomal_uL5_bac-type"/>
</dbReference>
<dbReference type="NCBIfam" id="TIGR00731">
    <property type="entry name" value="bL25_bact_ctc"/>
    <property type="match status" value="1"/>
</dbReference>
<dbReference type="NCBIfam" id="NF004128">
    <property type="entry name" value="PRK05618.1-2"/>
    <property type="match status" value="1"/>
</dbReference>
<dbReference type="NCBIfam" id="NF004612">
    <property type="entry name" value="PRK05943.1"/>
    <property type="match status" value="1"/>
</dbReference>
<dbReference type="PANTHER" id="PTHR33284">
    <property type="entry name" value="RIBOSOMAL PROTEIN L25/GLN-TRNA SYNTHETASE, ANTI-CODON-BINDING DOMAIN-CONTAINING PROTEIN"/>
    <property type="match status" value="1"/>
</dbReference>
<dbReference type="PANTHER" id="PTHR33284:SF1">
    <property type="entry name" value="RIBOSOMAL PROTEIN L25_GLN-TRNA SYNTHETASE, ANTI-CODON-BINDING DOMAIN-CONTAINING PROTEIN"/>
    <property type="match status" value="1"/>
</dbReference>
<dbReference type="Pfam" id="PF01386">
    <property type="entry name" value="Ribosomal_L25p"/>
    <property type="match status" value="1"/>
</dbReference>
<dbReference type="Pfam" id="PF14693">
    <property type="entry name" value="Ribosomal_TL5_C"/>
    <property type="match status" value="1"/>
</dbReference>
<dbReference type="SUPFAM" id="SSF50715">
    <property type="entry name" value="Ribosomal protein L25-like"/>
    <property type="match status" value="1"/>
</dbReference>
<name>RL25_BRUA4</name>
<protein>
    <recommendedName>
        <fullName evidence="1">Large ribosomal subunit protein bL25</fullName>
    </recommendedName>
    <alternativeName>
        <fullName evidence="3">50S ribosomal protein L25</fullName>
    </alternativeName>
    <alternativeName>
        <fullName evidence="1">General stress protein CTC</fullName>
    </alternativeName>
</protein>
<sequence>MSETYVLKADLRTRVGKGSSRELRRNGQIPAVIYGDKQEPLAIAVSYKEIFYKIHGGGFKTTVATIEVDGKKIQVLPKDYQLDPVRDFPQHVDFLRVSAKSVVHVNVPVHFKNEEAAPGIKRGGVLNIVRHDVELIVPANAIPEALEFDLTGLEIGDSVHISAIKLPKGVTAAIQDRDFTIATIAAPAGLKSEEAASEGAAEEEAKDGE</sequence>
<comment type="function">
    <text evidence="1">This is one of the proteins that binds to the 5S RNA in the ribosome where it forms part of the central protuberance.</text>
</comment>
<comment type="subunit">
    <text evidence="1">Part of the 50S ribosomal subunit; part of the 5S rRNA/L5/L18/L25 subcomplex. Contacts the 5S rRNA. Binds to the 5S rRNA independently of L5 and L18.</text>
</comment>
<comment type="similarity">
    <text evidence="1">Belongs to the bacterial ribosomal protein bL25 family. CTC subfamily.</text>
</comment>
<evidence type="ECO:0000255" key="1">
    <source>
        <dbReference type="HAMAP-Rule" id="MF_01334"/>
    </source>
</evidence>
<evidence type="ECO:0000256" key="2">
    <source>
        <dbReference type="SAM" id="MobiDB-lite"/>
    </source>
</evidence>
<evidence type="ECO:0000305" key="3"/>
<accession>A6WZE3</accession>
<keyword id="KW-1185">Reference proteome</keyword>
<keyword id="KW-0687">Ribonucleoprotein</keyword>
<keyword id="KW-0689">Ribosomal protein</keyword>
<keyword id="KW-0694">RNA-binding</keyword>
<keyword id="KW-0699">rRNA-binding</keyword>
<feature type="chain" id="PRO_1000052910" description="Large ribosomal subunit protein bL25">
    <location>
        <begin position="1"/>
        <end position="209"/>
    </location>
</feature>
<feature type="region of interest" description="Disordered" evidence="2">
    <location>
        <begin position="190"/>
        <end position="209"/>
    </location>
</feature>
<feature type="compositionally biased region" description="Acidic residues" evidence="2">
    <location>
        <begin position="200"/>
        <end position="209"/>
    </location>
</feature>
<proteinExistence type="inferred from homology"/>
<organism>
    <name type="scientific">Brucella anthropi (strain ATCC 49188 / DSM 6882 / CCUG 24695 / JCM 21032 / LMG 3331 / NBRC 15819 / NCTC 12168 / Alc 37)</name>
    <name type="common">Ochrobactrum anthropi</name>
    <dbReference type="NCBI Taxonomy" id="439375"/>
    <lineage>
        <taxon>Bacteria</taxon>
        <taxon>Pseudomonadati</taxon>
        <taxon>Pseudomonadota</taxon>
        <taxon>Alphaproteobacteria</taxon>
        <taxon>Hyphomicrobiales</taxon>
        <taxon>Brucellaceae</taxon>
        <taxon>Brucella/Ochrobactrum group</taxon>
        <taxon>Brucella</taxon>
    </lineage>
</organism>
<gene>
    <name evidence="1" type="primary">rplY</name>
    <name evidence="1" type="synonym">ctc</name>
    <name type="ordered locus">Oant_1631</name>
</gene>